<protein>
    <recommendedName>
        <fullName evidence="1">Large ribosomal subunit protein uL3</fullName>
    </recommendedName>
    <alternativeName>
        <fullName evidence="2">50S ribosomal protein L3</fullName>
    </alternativeName>
</protein>
<feature type="chain" id="PRO_0000241442" description="Large ribosomal subunit protein uL3">
    <location>
        <begin position="1"/>
        <end position="337"/>
    </location>
</feature>
<organism>
    <name type="scientific">Methanospirillum hungatei JF-1 (strain ATCC 27890 / DSM 864 / NBRC 100397 / JF-1)</name>
    <dbReference type="NCBI Taxonomy" id="323259"/>
    <lineage>
        <taxon>Archaea</taxon>
        <taxon>Methanobacteriati</taxon>
        <taxon>Methanobacteriota</taxon>
        <taxon>Stenosarchaea group</taxon>
        <taxon>Methanomicrobia</taxon>
        <taxon>Methanomicrobiales</taxon>
        <taxon>Methanospirillaceae</taxon>
        <taxon>Methanospirillum</taxon>
    </lineage>
</organism>
<keyword id="KW-1185">Reference proteome</keyword>
<keyword id="KW-0687">Ribonucleoprotein</keyword>
<keyword id="KW-0689">Ribosomal protein</keyword>
<keyword id="KW-0694">RNA-binding</keyword>
<keyword id="KW-0699">rRNA-binding</keyword>
<evidence type="ECO:0000255" key="1">
    <source>
        <dbReference type="HAMAP-Rule" id="MF_01325"/>
    </source>
</evidence>
<evidence type="ECO:0000305" key="2"/>
<proteinExistence type="inferred from homology"/>
<reference key="1">
    <citation type="journal article" date="2016" name="Stand. Genomic Sci.">
        <title>Complete genome sequence of Methanospirillum hungatei type strain JF1.</title>
        <authorList>
            <person name="Gunsalus R.P."/>
            <person name="Cook L.E."/>
            <person name="Crable B."/>
            <person name="Rohlin L."/>
            <person name="McDonald E."/>
            <person name="Mouttaki H."/>
            <person name="Sieber J.R."/>
            <person name="Poweleit N."/>
            <person name="Zhou H."/>
            <person name="Lapidus A.L."/>
            <person name="Daligault H.E."/>
            <person name="Land M."/>
            <person name="Gilna P."/>
            <person name="Ivanova N."/>
            <person name="Kyrpides N."/>
            <person name="Culley D.E."/>
            <person name="McInerney M.J."/>
        </authorList>
    </citation>
    <scope>NUCLEOTIDE SEQUENCE [LARGE SCALE GENOMIC DNA]</scope>
    <source>
        <strain>ATCC 27890 / DSM 864 / NBRC 100397 / JF-1</strain>
    </source>
</reference>
<dbReference type="EMBL" id="CP000254">
    <property type="protein sequence ID" value="ABD41958.1"/>
    <property type="molecule type" value="Genomic_DNA"/>
</dbReference>
<dbReference type="RefSeq" id="WP_011449216.1">
    <property type="nucleotide sequence ID" value="NC_007796.1"/>
</dbReference>
<dbReference type="SMR" id="Q2FU91"/>
<dbReference type="FunCoup" id="Q2FU91">
    <property type="interactions" value="130"/>
</dbReference>
<dbReference type="STRING" id="323259.Mhun_2253"/>
<dbReference type="EnsemblBacteria" id="ABD41958">
    <property type="protein sequence ID" value="ABD41958"/>
    <property type="gene ID" value="Mhun_2253"/>
</dbReference>
<dbReference type="GeneID" id="3924214"/>
<dbReference type="KEGG" id="mhu:Mhun_2253"/>
<dbReference type="eggNOG" id="arCOG04070">
    <property type="taxonomic scope" value="Archaea"/>
</dbReference>
<dbReference type="HOGENOM" id="CLU_033361_2_0_2"/>
<dbReference type="InParanoid" id="Q2FU91"/>
<dbReference type="OrthoDB" id="6121at2157"/>
<dbReference type="Proteomes" id="UP000001941">
    <property type="component" value="Chromosome"/>
</dbReference>
<dbReference type="GO" id="GO:0022625">
    <property type="term" value="C:cytosolic large ribosomal subunit"/>
    <property type="evidence" value="ECO:0007669"/>
    <property type="project" value="TreeGrafter"/>
</dbReference>
<dbReference type="GO" id="GO:0019843">
    <property type="term" value="F:rRNA binding"/>
    <property type="evidence" value="ECO:0007669"/>
    <property type="project" value="UniProtKB-UniRule"/>
</dbReference>
<dbReference type="GO" id="GO:0003735">
    <property type="term" value="F:structural constituent of ribosome"/>
    <property type="evidence" value="ECO:0007669"/>
    <property type="project" value="InterPro"/>
</dbReference>
<dbReference type="GO" id="GO:0006412">
    <property type="term" value="P:translation"/>
    <property type="evidence" value="ECO:0007669"/>
    <property type="project" value="UniProtKB-UniRule"/>
</dbReference>
<dbReference type="Gene3D" id="3.30.1430.10">
    <property type="match status" value="1"/>
</dbReference>
<dbReference type="Gene3D" id="4.10.960.10">
    <property type="entry name" value="Ribosomal protein L3, domain 3"/>
    <property type="match status" value="1"/>
</dbReference>
<dbReference type="Gene3D" id="2.40.30.10">
    <property type="entry name" value="Translation factors"/>
    <property type="match status" value="1"/>
</dbReference>
<dbReference type="HAMAP" id="MF_01325_A">
    <property type="entry name" value="Ribosomal_uL3_A"/>
    <property type="match status" value="1"/>
</dbReference>
<dbReference type="InterPro" id="IPR045077">
    <property type="entry name" value="L3_arc_euk"/>
</dbReference>
<dbReference type="InterPro" id="IPR044892">
    <property type="entry name" value="Ribosomal_L3_dom_3_arc_sf"/>
</dbReference>
<dbReference type="InterPro" id="IPR000597">
    <property type="entry name" value="Ribosomal_uL3"/>
</dbReference>
<dbReference type="InterPro" id="IPR019928">
    <property type="entry name" value="Ribosomal_uL3_arc"/>
</dbReference>
<dbReference type="InterPro" id="IPR019926">
    <property type="entry name" value="Ribosomal_uL3_CS"/>
</dbReference>
<dbReference type="InterPro" id="IPR009000">
    <property type="entry name" value="Transl_B-barrel_sf"/>
</dbReference>
<dbReference type="NCBIfam" id="TIGR03626">
    <property type="entry name" value="L3_arch"/>
    <property type="match status" value="1"/>
</dbReference>
<dbReference type="NCBIfam" id="NF003261">
    <property type="entry name" value="PRK04231.1"/>
    <property type="match status" value="1"/>
</dbReference>
<dbReference type="PANTHER" id="PTHR11363">
    <property type="entry name" value="60S RIBOSOMAL PROTEIN L3-RELATED"/>
    <property type="match status" value="1"/>
</dbReference>
<dbReference type="PANTHER" id="PTHR11363:SF5">
    <property type="entry name" value="LARGE RIBOSOMAL SUBUNIT PROTEIN UL3"/>
    <property type="match status" value="1"/>
</dbReference>
<dbReference type="Pfam" id="PF00297">
    <property type="entry name" value="Ribosomal_L3"/>
    <property type="match status" value="1"/>
</dbReference>
<dbReference type="SUPFAM" id="SSF50447">
    <property type="entry name" value="Translation proteins"/>
    <property type="match status" value="1"/>
</dbReference>
<dbReference type="PROSITE" id="PS00474">
    <property type="entry name" value="RIBOSOMAL_L3"/>
    <property type="match status" value="1"/>
</dbReference>
<accession>Q2FU91</accession>
<gene>
    <name evidence="1" type="primary">rpl3</name>
    <name type="ordered locus">Mhun_2253</name>
</gene>
<comment type="function">
    <text evidence="1">One of the primary rRNA binding proteins, it binds directly near the 3'-end of the 23S rRNA, where it nucleates assembly of the 50S subunit.</text>
</comment>
<comment type="subunit">
    <text evidence="1">Part of the 50S ribosomal subunit. Forms a cluster with proteins L14 and L24e.</text>
</comment>
<comment type="similarity">
    <text evidence="1">Belongs to the universal ribosomal protein uL3 family.</text>
</comment>
<sequence>MPTIHRPRMGSLAYSPRKRAKSPVPKYHAWPAYQGEPALQGFAGYKVGMTHVIMVDDHAHSPNEGKDIMVPVTVIEVPDMRVAAIRVYRHDTYGNHVLTEVWADSFDKELSRRLNLSKNYKREEAEKKIREALEADKIVDVVALTYTRPSVLTGVPKKVPDLMETRIDGGSMTERFEYGLSMLGKDFDIRSLFKVGQYTDVTAITKGKGTQGPVKRWGVHLRKRKHSRGKKERHVGTLGPWTPHHVRWQVPMMGQMGYHQRTEFNKRLLKIGEDGAEITPEGGFINYGEVRARYVLIKGSVPGPSKRLVRIRHAMRLGEHKIREPTIGFISLESKQG</sequence>
<name>RL3_METHJ</name>